<protein>
    <recommendedName>
        <fullName evidence="1">Sec-independent protein translocase protein TatC</fullName>
    </recommendedName>
</protein>
<comment type="function">
    <text evidence="1">Part of the twin-arginine translocation (Tat) system that transports large folded proteins containing a characteristic twin-arginine motif in their signal peptide across membranes. Together with TatB, TatC is part of a receptor directly interacting with Tat signal peptides.</text>
</comment>
<comment type="subunit">
    <text evidence="1">The Tat system comprises two distinct complexes: a TatABC complex, containing multiple copies of TatA, TatB and TatC subunits, and a separate TatA complex, containing only TatA subunits. Substrates initially bind to the TatABC complex, which probably triggers association of the separate TatA complex to form the active translocon.</text>
</comment>
<comment type="subcellular location">
    <subcellularLocation>
        <location evidence="1">Cell membrane</location>
        <topology evidence="1">Multi-pass membrane protein</topology>
    </subcellularLocation>
</comment>
<comment type="similarity">
    <text evidence="1">Belongs to the TatC family.</text>
</comment>
<keyword id="KW-1003">Cell membrane</keyword>
<keyword id="KW-0472">Membrane</keyword>
<keyword id="KW-0653">Protein transport</keyword>
<keyword id="KW-1185">Reference proteome</keyword>
<keyword id="KW-0811">Translocation</keyword>
<keyword id="KW-0812">Transmembrane</keyword>
<keyword id="KW-1133">Transmembrane helix</keyword>
<keyword id="KW-0813">Transport</keyword>
<dbReference type="EMBL" id="CP001620">
    <property type="protein sequence ID" value="ACR17661.1"/>
    <property type="molecule type" value="Genomic_DNA"/>
</dbReference>
<dbReference type="SMR" id="C4LIK6"/>
<dbReference type="STRING" id="645127.ckrop_0907"/>
<dbReference type="KEGG" id="ckp:ckrop_0907"/>
<dbReference type="eggNOG" id="COG0805">
    <property type="taxonomic scope" value="Bacteria"/>
</dbReference>
<dbReference type="HOGENOM" id="CLU_031942_6_0_11"/>
<dbReference type="OrthoDB" id="9777044at2"/>
<dbReference type="Proteomes" id="UP000001473">
    <property type="component" value="Chromosome"/>
</dbReference>
<dbReference type="GO" id="GO:0033281">
    <property type="term" value="C:TAT protein transport complex"/>
    <property type="evidence" value="ECO:0007669"/>
    <property type="project" value="UniProtKB-UniRule"/>
</dbReference>
<dbReference type="GO" id="GO:0009977">
    <property type="term" value="F:proton motive force dependent protein transmembrane transporter activity"/>
    <property type="evidence" value="ECO:0007669"/>
    <property type="project" value="TreeGrafter"/>
</dbReference>
<dbReference type="GO" id="GO:0065002">
    <property type="term" value="P:intracellular protein transmembrane transport"/>
    <property type="evidence" value="ECO:0007669"/>
    <property type="project" value="TreeGrafter"/>
</dbReference>
<dbReference type="GO" id="GO:0043953">
    <property type="term" value="P:protein transport by the Tat complex"/>
    <property type="evidence" value="ECO:0007669"/>
    <property type="project" value="UniProtKB-UniRule"/>
</dbReference>
<dbReference type="HAMAP" id="MF_00902">
    <property type="entry name" value="TatC"/>
    <property type="match status" value="1"/>
</dbReference>
<dbReference type="InterPro" id="IPR019820">
    <property type="entry name" value="Sec-indep_translocase_CS"/>
</dbReference>
<dbReference type="InterPro" id="IPR002033">
    <property type="entry name" value="TatC"/>
</dbReference>
<dbReference type="NCBIfam" id="TIGR00945">
    <property type="entry name" value="tatC"/>
    <property type="match status" value="1"/>
</dbReference>
<dbReference type="PANTHER" id="PTHR30371">
    <property type="entry name" value="SEC-INDEPENDENT PROTEIN TRANSLOCASE PROTEIN TATC"/>
    <property type="match status" value="1"/>
</dbReference>
<dbReference type="PANTHER" id="PTHR30371:SF0">
    <property type="entry name" value="SEC-INDEPENDENT PROTEIN TRANSLOCASE PROTEIN TATC, CHLOROPLASTIC-RELATED"/>
    <property type="match status" value="1"/>
</dbReference>
<dbReference type="Pfam" id="PF00902">
    <property type="entry name" value="TatC"/>
    <property type="match status" value="1"/>
</dbReference>
<dbReference type="PRINTS" id="PR01840">
    <property type="entry name" value="TATCFAMILY"/>
</dbReference>
<dbReference type="PROSITE" id="PS01218">
    <property type="entry name" value="TATC"/>
    <property type="match status" value="1"/>
</dbReference>
<gene>
    <name evidence="1" type="primary">tatC</name>
    <name type="ordered locus">ckrop_0907</name>
</gene>
<name>TATC_CORK4</name>
<accession>C4LIK6</accession>
<reference key="1">
    <citation type="journal article" date="2008" name="J. Biotechnol.">
        <title>Ultrafast pyrosequencing of Corynebacterium kroppenstedtii DSM44385 revealed insights into the physiology of a lipophilic corynebacterium that lacks mycolic acids.</title>
        <authorList>
            <person name="Tauch A."/>
            <person name="Schneider J."/>
            <person name="Szczepanowski R."/>
            <person name="Tilker A."/>
            <person name="Viehoever P."/>
            <person name="Gartemann K.-H."/>
            <person name="Arnold W."/>
            <person name="Blom J."/>
            <person name="Brinkrolf K."/>
            <person name="Brune I."/>
            <person name="Goetker S."/>
            <person name="Weisshaar B."/>
            <person name="Goesmann A."/>
            <person name="Droege M."/>
            <person name="Puehler A."/>
        </authorList>
    </citation>
    <scope>NUCLEOTIDE SEQUENCE [LARGE SCALE GENOMIC DNA]</scope>
    <source>
        <strain>DSM 44385 / JCM 11950 / CIP 105744 / CCUG 35717</strain>
    </source>
</reference>
<sequence>MTQSTSVSKGGRVSRKAKKNPDGTMSIVDHLRELRTRLLRALAAIAVTTIIGFIWYEHGIPAWAIGPLHVPRLPSLGEILKEPYCSLPPSARATFSADNECRLLATSPFEMFMLRMKMGGLAGLVMACPIWLIEIWRFITPGLLKNERRWTLSVGTIAGFLFVLGVVAAYLVLPMGLDVLLHLGDSTQISALTGEKYFNFVIALILVFGLSFEVPLFTAMLNLAGVVHYEQLKDKRRIMIVVIFIFAAIATPGQDPISMLVLALTLVVLMELALQFTRIHDRRAARHVSEWEGLSDDEASPLKVAPSSIPAAESIYDGDHKGIAGGGDAHPAGGSGPIPKPSPVTAPTRAPSASESPTPTPSPAPSDSPTSGSHHAPPAAVLRRGPRSWNDSTGDNDGKPGQDTIQSSSFDDVL</sequence>
<organism>
    <name type="scientific">Corynebacterium kroppenstedtii (strain DSM 44385 / JCM 11950 / CIP 105744 / CCUG 35717)</name>
    <dbReference type="NCBI Taxonomy" id="645127"/>
    <lineage>
        <taxon>Bacteria</taxon>
        <taxon>Bacillati</taxon>
        <taxon>Actinomycetota</taxon>
        <taxon>Actinomycetes</taxon>
        <taxon>Mycobacteriales</taxon>
        <taxon>Corynebacteriaceae</taxon>
        <taxon>Corynebacterium</taxon>
    </lineage>
</organism>
<feature type="chain" id="PRO_0000412861" description="Sec-independent protein translocase protein TatC">
    <location>
        <begin position="1"/>
        <end position="414"/>
    </location>
</feature>
<feature type="transmembrane region" description="Helical" evidence="1">
    <location>
        <begin position="45"/>
        <end position="65"/>
    </location>
</feature>
<feature type="transmembrane region" description="Helical" evidence="1">
    <location>
        <begin position="119"/>
        <end position="139"/>
    </location>
</feature>
<feature type="transmembrane region" description="Helical" evidence="1">
    <location>
        <begin position="157"/>
        <end position="177"/>
    </location>
</feature>
<feature type="transmembrane region" description="Helical" evidence="1">
    <location>
        <begin position="200"/>
        <end position="220"/>
    </location>
</feature>
<feature type="transmembrane region" description="Helical" evidence="1">
    <location>
        <begin position="238"/>
        <end position="258"/>
    </location>
</feature>
<feature type="transmembrane region" description="Helical" evidence="1">
    <location>
        <begin position="259"/>
        <end position="279"/>
    </location>
</feature>
<feature type="region of interest" description="Disordered" evidence="2">
    <location>
        <begin position="1"/>
        <end position="21"/>
    </location>
</feature>
<feature type="region of interest" description="Disordered" evidence="2">
    <location>
        <begin position="315"/>
        <end position="414"/>
    </location>
</feature>
<feature type="compositionally biased region" description="Gly residues" evidence="2">
    <location>
        <begin position="323"/>
        <end position="336"/>
    </location>
</feature>
<feature type="compositionally biased region" description="Low complexity" evidence="2">
    <location>
        <begin position="345"/>
        <end position="357"/>
    </location>
</feature>
<feature type="compositionally biased region" description="Polar residues" evidence="2">
    <location>
        <begin position="403"/>
        <end position="414"/>
    </location>
</feature>
<evidence type="ECO:0000255" key="1">
    <source>
        <dbReference type="HAMAP-Rule" id="MF_00902"/>
    </source>
</evidence>
<evidence type="ECO:0000256" key="2">
    <source>
        <dbReference type="SAM" id="MobiDB-lite"/>
    </source>
</evidence>
<proteinExistence type="inferred from homology"/>